<feature type="chain" id="PRO_0000072799" description="Agglutinin beta-4 chain">
    <location>
        <begin position="1"/>
        <end position="20" status="greater than"/>
    </location>
</feature>
<feature type="non-terminal residue" evidence="3">
    <location>
        <position position="20"/>
    </location>
</feature>
<feature type="strand" evidence="5">
    <location>
        <begin position="10"/>
        <end position="16"/>
    </location>
</feature>
<reference evidence="4" key="1">
    <citation type="journal article" date="1993" name="Biochim. Biophys. Acta">
        <title>The alpha- and beta-subunits of the jacalins are cleavage products from a 17-kDa precursor.</title>
        <authorList>
            <person name="Ngoc L.D."/>
            <person name="Brillard M."/>
            <person name="Hoebeke J."/>
        </authorList>
    </citation>
    <scope>PROTEIN SEQUENCE</scope>
</reference>
<proteinExistence type="evidence at protein level"/>
<keyword id="KW-0002">3D-structure</keyword>
<keyword id="KW-0903">Direct protein sequencing</keyword>
<keyword id="KW-0388">IgA-binding protein</keyword>
<keyword id="KW-0430">Lectin</keyword>
<organism>
    <name type="scientific">Artocarpus integer</name>
    <name type="common">Jack fruit</name>
    <name type="synonym">Artocarpus integrifolia</name>
    <dbReference type="NCBI Taxonomy" id="3490"/>
    <lineage>
        <taxon>Eukaryota</taxon>
        <taxon>Viridiplantae</taxon>
        <taxon>Streptophyta</taxon>
        <taxon>Embryophyta</taxon>
        <taxon>Tracheophyta</taxon>
        <taxon>Spermatophyta</taxon>
        <taxon>Magnoliopsida</taxon>
        <taxon>eudicotyledons</taxon>
        <taxon>Gunneridae</taxon>
        <taxon>Pentapetalae</taxon>
        <taxon>rosids</taxon>
        <taxon>fabids</taxon>
        <taxon>Rosales</taxon>
        <taxon>Moraceae</taxon>
        <taxon>Artocarpeae</taxon>
        <taxon>Artocarpus</taxon>
    </lineage>
</organism>
<comment type="function">
    <text evidence="1">D-galactose-specific lectin, binds the T-antigen structure Gal-beta1,3-GalNAc (Thomsen-Friedenreich-antigen-specific lectin). Potent and selective stimulant of distinct T- and B-cell functions. Shows a unique ability to specifically recognize IgA-1 from human serum (By similarity).</text>
</comment>
<comment type="subunit">
    <text evidence="1">Tetramer of four alpha chains associated with two or four beta chains.</text>
</comment>
<comment type="similarity">
    <text evidence="2">Belongs to the jacalin lectin family.</text>
</comment>
<evidence type="ECO:0000250" key="1">
    <source>
        <dbReference type="UniProtKB" id="P18673"/>
    </source>
</evidence>
<evidence type="ECO:0000255" key="2"/>
<evidence type="ECO:0000303" key="3">
    <source>
    </source>
</evidence>
<evidence type="ECO:0000305" key="4"/>
<evidence type="ECO:0007829" key="5">
    <source>
        <dbReference type="PDB" id="4AK4"/>
    </source>
</evidence>
<accession>Q9S8T0</accession>
<name>LECB4_ARTIN</name>
<sequence>NEQSGISQTVIVGPWGAQVT</sequence>
<dbReference type="PIR" id="S29636">
    <property type="entry name" value="S29636"/>
</dbReference>
<dbReference type="PDB" id="4AK4">
    <property type="method" value="X-ray"/>
    <property type="resolution" value="1.65 A"/>
    <property type="chains" value="B/D/F/H/J/L/N/P=1-19"/>
</dbReference>
<dbReference type="PDB" id="4AKB">
    <property type="method" value="X-ray"/>
    <property type="resolution" value="1.95 A"/>
    <property type="chains" value="B/D/F/H=1-19"/>
</dbReference>
<dbReference type="PDB" id="4AKC">
    <property type="method" value="X-ray"/>
    <property type="resolution" value="2.30 A"/>
    <property type="chains" value="B/D/F/H=1-19"/>
</dbReference>
<dbReference type="PDBsum" id="4AK4"/>
<dbReference type="PDBsum" id="4AKB"/>
<dbReference type="PDBsum" id="4AKC"/>
<dbReference type="SMR" id="Q9S8T0"/>
<dbReference type="UniLectin" id="Q9S8T0"/>
<dbReference type="GO" id="GO:0030246">
    <property type="term" value="F:carbohydrate binding"/>
    <property type="evidence" value="ECO:0000250"/>
    <property type="project" value="UniProtKB"/>
</dbReference>
<dbReference type="GO" id="GO:0019862">
    <property type="term" value="F:IgA binding"/>
    <property type="evidence" value="ECO:0000250"/>
    <property type="project" value="UniProtKB"/>
</dbReference>
<protein>
    <recommendedName>
        <fullName>Agglutinin beta-4 chain</fullName>
    </recommendedName>
    <alternativeName>
        <fullName>Jacalin beta-4 chain</fullName>
    </alternativeName>
</protein>